<proteinExistence type="inferred from homology"/>
<gene>
    <name evidence="1" type="primary">rpsI</name>
    <name type="ordered locus">BSUIS_A0827</name>
</gene>
<keyword id="KW-0687">Ribonucleoprotein</keyword>
<keyword id="KW-0689">Ribosomal protein</keyword>
<dbReference type="EMBL" id="CP000911">
    <property type="protein sequence ID" value="ABY37897.1"/>
    <property type="molecule type" value="Genomic_DNA"/>
</dbReference>
<dbReference type="RefSeq" id="WP_002963925.1">
    <property type="nucleotide sequence ID" value="NC_010169.1"/>
</dbReference>
<dbReference type="SMR" id="B0CLB7"/>
<dbReference type="GeneID" id="97533901"/>
<dbReference type="KEGG" id="bmt:BSUIS_A0827"/>
<dbReference type="HOGENOM" id="CLU_046483_2_0_5"/>
<dbReference type="Proteomes" id="UP000008545">
    <property type="component" value="Chromosome I"/>
</dbReference>
<dbReference type="GO" id="GO:0022627">
    <property type="term" value="C:cytosolic small ribosomal subunit"/>
    <property type="evidence" value="ECO:0007669"/>
    <property type="project" value="TreeGrafter"/>
</dbReference>
<dbReference type="GO" id="GO:0003723">
    <property type="term" value="F:RNA binding"/>
    <property type="evidence" value="ECO:0007669"/>
    <property type="project" value="TreeGrafter"/>
</dbReference>
<dbReference type="GO" id="GO:0003735">
    <property type="term" value="F:structural constituent of ribosome"/>
    <property type="evidence" value="ECO:0007669"/>
    <property type="project" value="InterPro"/>
</dbReference>
<dbReference type="GO" id="GO:0006412">
    <property type="term" value="P:translation"/>
    <property type="evidence" value="ECO:0007669"/>
    <property type="project" value="UniProtKB-UniRule"/>
</dbReference>
<dbReference type="FunFam" id="3.30.230.10:FF:000034">
    <property type="entry name" value="30S ribosomal protein S9"/>
    <property type="match status" value="1"/>
</dbReference>
<dbReference type="Gene3D" id="3.30.230.10">
    <property type="match status" value="1"/>
</dbReference>
<dbReference type="HAMAP" id="MF_00532_B">
    <property type="entry name" value="Ribosomal_uS9_B"/>
    <property type="match status" value="1"/>
</dbReference>
<dbReference type="InterPro" id="IPR020568">
    <property type="entry name" value="Ribosomal_Su5_D2-typ_SF"/>
</dbReference>
<dbReference type="InterPro" id="IPR000754">
    <property type="entry name" value="Ribosomal_uS9"/>
</dbReference>
<dbReference type="InterPro" id="IPR023035">
    <property type="entry name" value="Ribosomal_uS9_bac/plastid"/>
</dbReference>
<dbReference type="InterPro" id="IPR020574">
    <property type="entry name" value="Ribosomal_uS9_CS"/>
</dbReference>
<dbReference type="InterPro" id="IPR014721">
    <property type="entry name" value="Ribsml_uS5_D2-typ_fold_subgr"/>
</dbReference>
<dbReference type="NCBIfam" id="NF001099">
    <property type="entry name" value="PRK00132.1"/>
    <property type="match status" value="1"/>
</dbReference>
<dbReference type="PANTHER" id="PTHR21569">
    <property type="entry name" value="RIBOSOMAL PROTEIN S9"/>
    <property type="match status" value="1"/>
</dbReference>
<dbReference type="PANTHER" id="PTHR21569:SF1">
    <property type="entry name" value="SMALL RIBOSOMAL SUBUNIT PROTEIN US9M"/>
    <property type="match status" value="1"/>
</dbReference>
<dbReference type="Pfam" id="PF00380">
    <property type="entry name" value="Ribosomal_S9"/>
    <property type="match status" value="1"/>
</dbReference>
<dbReference type="SUPFAM" id="SSF54211">
    <property type="entry name" value="Ribosomal protein S5 domain 2-like"/>
    <property type="match status" value="1"/>
</dbReference>
<dbReference type="PROSITE" id="PS00360">
    <property type="entry name" value="RIBOSOMAL_S9"/>
    <property type="match status" value="1"/>
</dbReference>
<feature type="chain" id="PRO_1000081805" description="Small ribosomal subunit protein uS9">
    <location>
        <begin position="1"/>
        <end position="158"/>
    </location>
</feature>
<accession>B0CLB7</accession>
<organism>
    <name type="scientific">Brucella suis (strain ATCC 23445 / NCTC 10510)</name>
    <dbReference type="NCBI Taxonomy" id="470137"/>
    <lineage>
        <taxon>Bacteria</taxon>
        <taxon>Pseudomonadati</taxon>
        <taxon>Pseudomonadota</taxon>
        <taxon>Alphaproteobacteria</taxon>
        <taxon>Hyphomicrobiales</taxon>
        <taxon>Brucellaceae</taxon>
        <taxon>Brucella/Ochrobactrum group</taxon>
        <taxon>Brucella</taxon>
    </lineage>
</organism>
<protein>
    <recommendedName>
        <fullName evidence="1">Small ribosomal subunit protein uS9</fullName>
    </recommendedName>
    <alternativeName>
        <fullName evidence="2">30S ribosomal protein S9</fullName>
    </alternativeName>
</protein>
<comment type="similarity">
    <text evidence="1">Belongs to the universal ribosomal protein uS9 family.</text>
</comment>
<reference key="1">
    <citation type="submission" date="2007-12" db="EMBL/GenBank/DDBJ databases">
        <title>Brucella suis ATCC 23445 whole genome shotgun sequencing project.</title>
        <authorList>
            <person name="Setubal J.C."/>
            <person name="Bowns C."/>
            <person name="Boyle S."/>
            <person name="Crasta O.R."/>
            <person name="Czar M.J."/>
            <person name="Dharmanolla C."/>
            <person name="Gillespie J.J."/>
            <person name="Kenyon R.W."/>
            <person name="Lu J."/>
            <person name="Mane S."/>
            <person name="Mohapatra S."/>
            <person name="Nagrani S."/>
            <person name="Purkayastha A."/>
            <person name="Rajasimha H.K."/>
            <person name="Shallom J.M."/>
            <person name="Shallom S."/>
            <person name="Shukla M."/>
            <person name="Snyder E.E."/>
            <person name="Sobral B.W."/>
            <person name="Wattam A.R."/>
            <person name="Will R."/>
            <person name="Williams K."/>
            <person name="Yoo H."/>
            <person name="Bruce D."/>
            <person name="Detter C."/>
            <person name="Munk C."/>
            <person name="Brettin T.S."/>
        </authorList>
    </citation>
    <scope>NUCLEOTIDE SEQUENCE [LARGE SCALE GENOMIC DNA]</scope>
    <source>
        <strain>ATCC 23445 / NCTC 10510</strain>
    </source>
</reference>
<name>RS9_BRUSI</name>
<sequence length="158" mass="17221">MAESINSLEELGTVAKTEAAAPVHVQKLDAQGRAYATGKRKDAVARVWVKPGTGKITVNDKEFEKYFARPVLQMILQQPIVASNRAGQFDIVATVAGGGLSGQAGAVRHGISKALTYYEPGLRTVLKKGGFLTRDSRVVERKKYGKAKARRSFQFSKR</sequence>
<evidence type="ECO:0000255" key="1">
    <source>
        <dbReference type="HAMAP-Rule" id="MF_00532"/>
    </source>
</evidence>
<evidence type="ECO:0000305" key="2"/>